<accession>Q73YZ5</accession>
<gene>
    <name evidence="1" type="primary">ssuB</name>
    <name type="ordered locus">MAP_1808c</name>
</gene>
<organism>
    <name type="scientific">Mycolicibacterium paratuberculosis (strain ATCC BAA-968 / K-10)</name>
    <name type="common">Mycobacterium paratuberculosis</name>
    <dbReference type="NCBI Taxonomy" id="262316"/>
    <lineage>
        <taxon>Bacteria</taxon>
        <taxon>Bacillati</taxon>
        <taxon>Actinomycetota</taxon>
        <taxon>Actinomycetes</taxon>
        <taxon>Mycobacteriales</taxon>
        <taxon>Mycobacteriaceae</taxon>
        <taxon>Mycobacterium</taxon>
        <taxon>Mycobacterium avium complex (MAC)</taxon>
    </lineage>
</organism>
<comment type="function">
    <text evidence="1">Part of the ABC transporter complex SsuABC involved in aliphatic sulfonates import. Responsible for energy coupling to the transport system.</text>
</comment>
<comment type="catalytic activity">
    <reaction evidence="1">
        <text>ATP + H2O + aliphatic sulfonate-[sulfonate-binding protein]Side 1 = ADP + phosphate + aliphatic sulfonateSide 2 + [sulfonate-binding protein]Side 1.</text>
        <dbReference type="EC" id="7.6.2.14"/>
    </reaction>
</comment>
<comment type="subunit">
    <text evidence="1">The complex is composed of two ATP-binding proteins (SsuB), two transmembrane proteins (SsuC) and a solute-binding protein (SsuA).</text>
</comment>
<comment type="subcellular location">
    <subcellularLocation>
        <location evidence="1">Cell membrane</location>
        <topology evidence="1">Peripheral membrane protein</topology>
    </subcellularLocation>
</comment>
<comment type="similarity">
    <text evidence="1">Belongs to the ABC transporter superfamily. Aliphatic sulfonates importer (TC 3.A.1.17.2) family.</text>
</comment>
<reference key="1">
    <citation type="journal article" date="2005" name="Proc. Natl. Acad. Sci. U.S.A.">
        <title>The complete genome sequence of Mycobacterium avium subspecies paratuberculosis.</title>
        <authorList>
            <person name="Li L."/>
            <person name="Bannantine J.P."/>
            <person name="Zhang Q."/>
            <person name="Amonsin A."/>
            <person name="May B.J."/>
            <person name="Alt D."/>
            <person name="Banerji N."/>
            <person name="Kanjilal S."/>
            <person name="Kapur V."/>
        </authorList>
    </citation>
    <scope>NUCLEOTIDE SEQUENCE [LARGE SCALE GENOMIC DNA]</scope>
    <source>
        <strain>ATCC BAA-968 / K-10</strain>
    </source>
</reference>
<evidence type="ECO:0000255" key="1">
    <source>
        <dbReference type="HAMAP-Rule" id="MF_01724"/>
    </source>
</evidence>
<keyword id="KW-0067">ATP-binding</keyword>
<keyword id="KW-1003">Cell membrane</keyword>
<keyword id="KW-0472">Membrane</keyword>
<keyword id="KW-0547">Nucleotide-binding</keyword>
<keyword id="KW-1185">Reference proteome</keyword>
<keyword id="KW-1278">Translocase</keyword>
<keyword id="KW-0813">Transport</keyword>
<sequence length="251" mass="27571">MTLTAESGPLAGSRTDVAGELRHVDKWYGNRHVLQDVSLQIPSGQIVALIGRSGSGKSTVLRVLAGLSHDHTGRRLVAGAPALAFQEPRLFPWRDVRTNVGYGLTRTRLPRAQVRRRAERALADVGLADHARAWPLTLSGGQAQRVSLARALVAEPRLLLLDEPFGALDALTRLSMHTLLLDLWRRHGFGVLLVTHDVDEAVALADRVLVLEDGRVVHELAIDPPRRTPGEPGAHTERYRAELLDRLGVRQ</sequence>
<name>SSUB_MYCPA</name>
<protein>
    <recommendedName>
        <fullName evidence="1">Aliphatic sulfonates import ATP-binding protein SsuB</fullName>
        <ecNumber evidence="1">7.6.2.14</ecNumber>
    </recommendedName>
</protein>
<dbReference type="EC" id="7.6.2.14" evidence="1"/>
<dbReference type="EMBL" id="AE016958">
    <property type="protein sequence ID" value="AAS04125.1"/>
    <property type="molecule type" value="Genomic_DNA"/>
</dbReference>
<dbReference type="RefSeq" id="WP_003872133.1">
    <property type="nucleotide sequence ID" value="NZ_CP106873.1"/>
</dbReference>
<dbReference type="SMR" id="Q73YZ5"/>
<dbReference type="STRING" id="262316.MAP_1808c"/>
<dbReference type="KEGG" id="mpa:MAP_1808c"/>
<dbReference type="eggNOG" id="COG1116">
    <property type="taxonomic scope" value="Bacteria"/>
</dbReference>
<dbReference type="HOGENOM" id="CLU_000604_1_22_11"/>
<dbReference type="Proteomes" id="UP000000580">
    <property type="component" value="Chromosome"/>
</dbReference>
<dbReference type="GO" id="GO:0005886">
    <property type="term" value="C:plasma membrane"/>
    <property type="evidence" value="ECO:0007669"/>
    <property type="project" value="UniProtKB-SubCell"/>
</dbReference>
<dbReference type="GO" id="GO:0005524">
    <property type="term" value="F:ATP binding"/>
    <property type="evidence" value="ECO:0007669"/>
    <property type="project" value="UniProtKB-KW"/>
</dbReference>
<dbReference type="GO" id="GO:0016887">
    <property type="term" value="F:ATP hydrolysis activity"/>
    <property type="evidence" value="ECO:0007669"/>
    <property type="project" value="InterPro"/>
</dbReference>
<dbReference type="CDD" id="cd03293">
    <property type="entry name" value="ABC_NrtD_SsuB_transporters"/>
    <property type="match status" value="1"/>
</dbReference>
<dbReference type="Gene3D" id="3.40.50.300">
    <property type="entry name" value="P-loop containing nucleotide triphosphate hydrolases"/>
    <property type="match status" value="1"/>
</dbReference>
<dbReference type="InterPro" id="IPR003593">
    <property type="entry name" value="AAA+_ATPase"/>
</dbReference>
<dbReference type="InterPro" id="IPR003439">
    <property type="entry name" value="ABC_transporter-like_ATP-bd"/>
</dbReference>
<dbReference type="InterPro" id="IPR017871">
    <property type="entry name" value="ABC_transporter-like_CS"/>
</dbReference>
<dbReference type="InterPro" id="IPR050166">
    <property type="entry name" value="ABC_transporter_ATP-bind"/>
</dbReference>
<dbReference type="InterPro" id="IPR027417">
    <property type="entry name" value="P-loop_NTPase"/>
</dbReference>
<dbReference type="PANTHER" id="PTHR42788:SF17">
    <property type="entry name" value="ALIPHATIC SULFONATES IMPORT ATP-BINDING PROTEIN SSUB"/>
    <property type="match status" value="1"/>
</dbReference>
<dbReference type="PANTHER" id="PTHR42788">
    <property type="entry name" value="TAURINE IMPORT ATP-BINDING PROTEIN-RELATED"/>
    <property type="match status" value="1"/>
</dbReference>
<dbReference type="Pfam" id="PF00005">
    <property type="entry name" value="ABC_tran"/>
    <property type="match status" value="1"/>
</dbReference>
<dbReference type="SMART" id="SM00382">
    <property type="entry name" value="AAA"/>
    <property type="match status" value="1"/>
</dbReference>
<dbReference type="SUPFAM" id="SSF52540">
    <property type="entry name" value="P-loop containing nucleoside triphosphate hydrolases"/>
    <property type="match status" value="1"/>
</dbReference>
<dbReference type="PROSITE" id="PS00211">
    <property type="entry name" value="ABC_TRANSPORTER_1"/>
    <property type="match status" value="1"/>
</dbReference>
<dbReference type="PROSITE" id="PS50893">
    <property type="entry name" value="ABC_TRANSPORTER_2"/>
    <property type="match status" value="1"/>
</dbReference>
<dbReference type="PROSITE" id="PS51291">
    <property type="entry name" value="SSUB"/>
    <property type="match status" value="1"/>
</dbReference>
<proteinExistence type="inferred from homology"/>
<feature type="chain" id="PRO_0000279920" description="Aliphatic sulfonates import ATP-binding protein SsuB">
    <location>
        <begin position="1"/>
        <end position="251"/>
    </location>
</feature>
<feature type="domain" description="ABC transporter" evidence="1">
    <location>
        <begin position="19"/>
        <end position="238"/>
    </location>
</feature>
<feature type="binding site" evidence="1">
    <location>
        <begin position="51"/>
        <end position="58"/>
    </location>
    <ligand>
        <name>ATP</name>
        <dbReference type="ChEBI" id="CHEBI:30616"/>
    </ligand>
</feature>